<sequence length="146" mass="16440">MIDVMQIQEILPHRYPFLLVDKITELKVKEVVLGYKNISISDHVFMGHFPGHPIYPGVLILEGMAQTGGVLAFESMEDKVDPKSKVVYFTGIDGAKFRNPVRPGDRLDYEMSVVKNRGNMWIFKGQAFVDGNLVAEAELKAMIVDK</sequence>
<reference key="1">
    <citation type="journal article" date="2005" name="PLoS Biol.">
        <title>Major structural differences and novel potential virulence mechanisms from the genomes of multiple Campylobacter species.</title>
        <authorList>
            <person name="Fouts D.E."/>
            <person name="Mongodin E.F."/>
            <person name="Mandrell R.E."/>
            <person name="Miller W.G."/>
            <person name="Rasko D.A."/>
            <person name="Ravel J."/>
            <person name="Brinkac L.M."/>
            <person name="DeBoy R.T."/>
            <person name="Parker C.T."/>
            <person name="Daugherty S.C."/>
            <person name="Dodson R.J."/>
            <person name="Durkin A.S."/>
            <person name="Madupu R."/>
            <person name="Sullivan S.A."/>
            <person name="Shetty J.U."/>
            <person name="Ayodeji M.A."/>
            <person name="Shvartsbeyn A."/>
            <person name="Schatz M.C."/>
            <person name="Badger J.H."/>
            <person name="Fraser C.M."/>
            <person name="Nelson K.E."/>
        </authorList>
    </citation>
    <scope>NUCLEOTIDE SEQUENCE [LARGE SCALE GENOMIC DNA]</scope>
    <source>
        <strain>RM1221</strain>
    </source>
</reference>
<feature type="chain" id="PRO_0000091658" description="3-hydroxyacyl-[acyl-carrier-protein] dehydratase FabZ">
    <location>
        <begin position="1"/>
        <end position="146"/>
    </location>
</feature>
<feature type="active site" evidence="1">
    <location>
        <position position="48"/>
    </location>
</feature>
<accession>Q5HWJ3</accession>
<gene>
    <name evidence="1" type="primary">fabZ</name>
    <name type="ordered locus">CJE0322</name>
</gene>
<evidence type="ECO:0000255" key="1">
    <source>
        <dbReference type="HAMAP-Rule" id="MF_00406"/>
    </source>
</evidence>
<keyword id="KW-0963">Cytoplasm</keyword>
<keyword id="KW-0441">Lipid A biosynthesis</keyword>
<keyword id="KW-0444">Lipid biosynthesis</keyword>
<keyword id="KW-0443">Lipid metabolism</keyword>
<keyword id="KW-0456">Lyase</keyword>
<dbReference type="EC" id="4.2.1.59" evidence="1"/>
<dbReference type="EMBL" id="CP000025">
    <property type="protein sequence ID" value="AAW34912.1"/>
    <property type="molecule type" value="Genomic_DNA"/>
</dbReference>
<dbReference type="RefSeq" id="WP_002857452.1">
    <property type="nucleotide sequence ID" value="NC_003912.7"/>
</dbReference>
<dbReference type="SMR" id="Q5HWJ3"/>
<dbReference type="KEGG" id="cjr:CJE0322"/>
<dbReference type="HOGENOM" id="CLU_078912_1_2_7"/>
<dbReference type="GO" id="GO:0005737">
    <property type="term" value="C:cytoplasm"/>
    <property type="evidence" value="ECO:0007669"/>
    <property type="project" value="UniProtKB-SubCell"/>
</dbReference>
<dbReference type="GO" id="GO:0016020">
    <property type="term" value="C:membrane"/>
    <property type="evidence" value="ECO:0007669"/>
    <property type="project" value="GOC"/>
</dbReference>
<dbReference type="GO" id="GO:0019171">
    <property type="term" value="F:(3R)-hydroxyacyl-[acyl-carrier-protein] dehydratase activity"/>
    <property type="evidence" value="ECO:0007669"/>
    <property type="project" value="UniProtKB-EC"/>
</dbReference>
<dbReference type="GO" id="GO:0006633">
    <property type="term" value="P:fatty acid biosynthetic process"/>
    <property type="evidence" value="ECO:0007669"/>
    <property type="project" value="UniProtKB-UniRule"/>
</dbReference>
<dbReference type="GO" id="GO:0009245">
    <property type="term" value="P:lipid A biosynthetic process"/>
    <property type="evidence" value="ECO:0007669"/>
    <property type="project" value="UniProtKB-UniRule"/>
</dbReference>
<dbReference type="CDD" id="cd01288">
    <property type="entry name" value="FabZ"/>
    <property type="match status" value="1"/>
</dbReference>
<dbReference type="FunFam" id="3.10.129.10:FF:000076">
    <property type="entry name" value="3-hydroxyacyl-[acyl-carrier-protein] dehydratase FabZ"/>
    <property type="match status" value="1"/>
</dbReference>
<dbReference type="Gene3D" id="3.10.129.10">
    <property type="entry name" value="Hotdog Thioesterase"/>
    <property type="match status" value="1"/>
</dbReference>
<dbReference type="HAMAP" id="MF_00406">
    <property type="entry name" value="FabZ"/>
    <property type="match status" value="1"/>
</dbReference>
<dbReference type="InterPro" id="IPR013114">
    <property type="entry name" value="FabA_FabZ"/>
</dbReference>
<dbReference type="InterPro" id="IPR010084">
    <property type="entry name" value="FabZ"/>
</dbReference>
<dbReference type="InterPro" id="IPR029069">
    <property type="entry name" value="HotDog_dom_sf"/>
</dbReference>
<dbReference type="NCBIfam" id="TIGR01750">
    <property type="entry name" value="fabZ"/>
    <property type="match status" value="1"/>
</dbReference>
<dbReference type="NCBIfam" id="NF000582">
    <property type="entry name" value="PRK00006.1"/>
    <property type="match status" value="1"/>
</dbReference>
<dbReference type="PANTHER" id="PTHR30272">
    <property type="entry name" value="3-HYDROXYACYL-[ACYL-CARRIER-PROTEIN] DEHYDRATASE"/>
    <property type="match status" value="1"/>
</dbReference>
<dbReference type="PANTHER" id="PTHR30272:SF1">
    <property type="entry name" value="3-HYDROXYACYL-[ACYL-CARRIER-PROTEIN] DEHYDRATASE"/>
    <property type="match status" value="1"/>
</dbReference>
<dbReference type="Pfam" id="PF07977">
    <property type="entry name" value="FabA"/>
    <property type="match status" value="1"/>
</dbReference>
<dbReference type="SUPFAM" id="SSF54637">
    <property type="entry name" value="Thioesterase/thiol ester dehydrase-isomerase"/>
    <property type="match status" value="1"/>
</dbReference>
<comment type="function">
    <text evidence="1">Involved in unsaturated fatty acids biosynthesis. Catalyzes the dehydration of short chain beta-hydroxyacyl-ACPs and long chain saturated and unsaturated beta-hydroxyacyl-ACPs.</text>
</comment>
<comment type="catalytic activity">
    <reaction evidence="1">
        <text>a (3R)-hydroxyacyl-[ACP] = a (2E)-enoyl-[ACP] + H2O</text>
        <dbReference type="Rhea" id="RHEA:13097"/>
        <dbReference type="Rhea" id="RHEA-COMP:9925"/>
        <dbReference type="Rhea" id="RHEA-COMP:9945"/>
        <dbReference type="ChEBI" id="CHEBI:15377"/>
        <dbReference type="ChEBI" id="CHEBI:78784"/>
        <dbReference type="ChEBI" id="CHEBI:78827"/>
        <dbReference type="EC" id="4.2.1.59"/>
    </reaction>
</comment>
<comment type="subcellular location">
    <subcellularLocation>
        <location evidence="1">Cytoplasm</location>
    </subcellularLocation>
</comment>
<comment type="similarity">
    <text evidence="1">Belongs to the thioester dehydratase family. FabZ subfamily.</text>
</comment>
<name>FABZ_CAMJR</name>
<protein>
    <recommendedName>
        <fullName evidence="1">3-hydroxyacyl-[acyl-carrier-protein] dehydratase FabZ</fullName>
        <ecNumber evidence="1">4.2.1.59</ecNumber>
    </recommendedName>
    <alternativeName>
        <fullName evidence="1">(3R)-hydroxymyristoyl-[acyl-carrier-protein] dehydratase</fullName>
        <shortName evidence="1">(3R)-hydroxymyristoyl-ACP dehydrase</shortName>
    </alternativeName>
    <alternativeName>
        <fullName evidence="1">Beta-hydroxyacyl-ACP dehydratase</fullName>
    </alternativeName>
</protein>
<proteinExistence type="inferred from homology"/>
<organism>
    <name type="scientific">Campylobacter jejuni (strain RM1221)</name>
    <dbReference type="NCBI Taxonomy" id="195099"/>
    <lineage>
        <taxon>Bacteria</taxon>
        <taxon>Pseudomonadati</taxon>
        <taxon>Campylobacterota</taxon>
        <taxon>Epsilonproteobacteria</taxon>
        <taxon>Campylobacterales</taxon>
        <taxon>Campylobacteraceae</taxon>
        <taxon>Campylobacter</taxon>
    </lineage>
</organism>